<comment type="catalytic activity">
    <reaction evidence="1">
        <text>aldehydo-D-galactose 6-phosphate = keto-D-tagatose 6-phosphate</text>
        <dbReference type="Rhea" id="RHEA:13033"/>
        <dbReference type="ChEBI" id="CHEBI:58255"/>
        <dbReference type="ChEBI" id="CHEBI:134283"/>
        <dbReference type="EC" id="5.3.1.26"/>
    </reaction>
</comment>
<comment type="pathway">
    <text evidence="1">Carbohydrate metabolism; D-galactose 6-phosphate degradation; D-tagatose 6-phosphate from D-galactose 6-phosphate: step 1/1.</text>
</comment>
<comment type="subunit">
    <text evidence="1">Heteromultimeric protein consisting of LacA and LacB.</text>
</comment>
<comment type="similarity">
    <text evidence="1">Belongs to the LacAB/RpiB family.</text>
</comment>
<name>LACA_STRPN</name>
<evidence type="ECO:0000255" key="1">
    <source>
        <dbReference type="HAMAP-Rule" id="MF_01555"/>
    </source>
</evidence>
<keyword id="KW-0413">Isomerase</keyword>
<keyword id="KW-0423">Lactose metabolism</keyword>
<keyword id="KW-1185">Reference proteome</keyword>
<gene>
    <name evidence="1" type="primary">lacA</name>
    <name type="ordered locus">SP_1193</name>
</gene>
<protein>
    <recommendedName>
        <fullName evidence="1">Galactose-6-phosphate isomerase subunit LacA</fullName>
        <ecNumber evidence="1">5.3.1.26</ecNumber>
    </recommendedName>
</protein>
<proteinExistence type="inferred from homology"/>
<feature type="chain" id="PRO_0000208120" description="Galactose-6-phosphate isomerase subunit LacA">
    <location>
        <begin position="1"/>
        <end position="141"/>
    </location>
</feature>
<organism>
    <name type="scientific">Streptococcus pneumoniae serotype 4 (strain ATCC BAA-334 / TIGR4)</name>
    <dbReference type="NCBI Taxonomy" id="170187"/>
    <lineage>
        <taxon>Bacteria</taxon>
        <taxon>Bacillati</taxon>
        <taxon>Bacillota</taxon>
        <taxon>Bacilli</taxon>
        <taxon>Lactobacillales</taxon>
        <taxon>Streptococcaceae</taxon>
        <taxon>Streptococcus</taxon>
    </lineage>
</organism>
<dbReference type="EC" id="5.3.1.26" evidence="1"/>
<dbReference type="EMBL" id="AE005672">
    <property type="protein sequence ID" value="AAK75302.1"/>
    <property type="molecule type" value="Genomic_DNA"/>
</dbReference>
<dbReference type="PIR" id="E95138">
    <property type="entry name" value="E95138"/>
</dbReference>
<dbReference type="RefSeq" id="WP_000029269.1">
    <property type="nucleotide sequence ID" value="NZ_CP155539.1"/>
</dbReference>
<dbReference type="SMR" id="Q97QL0"/>
<dbReference type="PaxDb" id="170187-SP_1193"/>
<dbReference type="EnsemblBacteria" id="AAK75302">
    <property type="protein sequence ID" value="AAK75302"/>
    <property type="gene ID" value="SP_1193"/>
</dbReference>
<dbReference type="KEGG" id="spn:SP_1193"/>
<dbReference type="eggNOG" id="COG0698">
    <property type="taxonomic scope" value="Bacteria"/>
</dbReference>
<dbReference type="PhylomeDB" id="Q97QL0"/>
<dbReference type="BioCyc" id="SPNE170187:G1FZB-1210-MONOMER"/>
<dbReference type="UniPathway" id="UPA00702">
    <property type="reaction ID" value="UER00714"/>
</dbReference>
<dbReference type="Proteomes" id="UP000000585">
    <property type="component" value="Chromosome"/>
</dbReference>
<dbReference type="GO" id="GO:0050044">
    <property type="term" value="F:galactose-6-phosphate isomerase activity"/>
    <property type="evidence" value="ECO:0007669"/>
    <property type="project" value="UniProtKB-UniRule"/>
</dbReference>
<dbReference type="GO" id="GO:0004751">
    <property type="term" value="F:ribose-5-phosphate isomerase activity"/>
    <property type="evidence" value="ECO:0007669"/>
    <property type="project" value="TreeGrafter"/>
</dbReference>
<dbReference type="GO" id="GO:0019316">
    <property type="term" value="P:D-allose catabolic process"/>
    <property type="evidence" value="ECO:0007669"/>
    <property type="project" value="TreeGrafter"/>
</dbReference>
<dbReference type="GO" id="GO:0019388">
    <property type="term" value="P:galactose catabolic process"/>
    <property type="evidence" value="ECO:0007669"/>
    <property type="project" value="UniProtKB-UniPathway"/>
</dbReference>
<dbReference type="GO" id="GO:0019512">
    <property type="term" value="P:lactose catabolic process via tagatose-6-phosphate"/>
    <property type="evidence" value="ECO:0007669"/>
    <property type="project" value="UniProtKB-UniRule"/>
</dbReference>
<dbReference type="GO" id="GO:0009052">
    <property type="term" value="P:pentose-phosphate shunt, non-oxidative branch"/>
    <property type="evidence" value="ECO:0007669"/>
    <property type="project" value="TreeGrafter"/>
</dbReference>
<dbReference type="Gene3D" id="3.40.1400.10">
    <property type="entry name" value="Sugar-phosphate isomerase, RpiB/LacA/LacB"/>
    <property type="match status" value="1"/>
</dbReference>
<dbReference type="HAMAP" id="MF_01555">
    <property type="entry name" value="LacA"/>
    <property type="match status" value="1"/>
</dbReference>
<dbReference type="InterPro" id="IPR004783">
    <property type="entry name" value="LacA"/>
</dbReference>
<dbReference type="InterPro" id="IPR003500">
    <property type="entry name" value="RpiB_LacA_LacB"/>
</dbReference>
<dbReference type="InterPro" id="IPR036569">
    <property type="entry name" value="RpiB_LacA_LacB_sf"/>
</dbReference>
<dbReference type="NCBIfam" id="TIGR01118">
    <property type="entry name" value="lacA"/>
    <property type="match status" value="1"/>
</dbReference>
<dbReference type="NCBIfam" id="NF006380">
    <property type="entry name" value="PRK08621.1"/>
    <property type="match status" value="1"/>
</dbReference>
<dbReference type="NCBIfam" id="NF009257">
    <property type="entry name" value="PRK12613.1"/>
    <property type="match status" value="1"/>
</dbReference>
<dbReference type="NCBIfam" id="TIGR00689">
    <property type="entry name" value="rpiB_lacA_lacB"/>
    <property type="match status" value="1"/>
</dbReference>
<dbReference type="PANTHER" id="PTHR30345:SF5">
    <property type="entry name" value="GALACTOSE-6-PHOSPHATE ISOMERASE SUBUNIT LACA"/>
    <property type="match status" value="1"/>
</dbReference>
<dbReference type="PANTHER" id="PTHR30345">
    <property type="entry name" value="RIBOSE-5-PHOSPHATE ISOMERASE B"/>
    <property type="match status" value="1"/>
</dbReference>
<dbReference type="Pfam" id="PF02502">
    <property type="entry name" value="LacAB_rpiB"/>
    <property type="match status" value="1"/>
</dbReference>
<dbReference type="PIRSF" id="PIRSF005384">
    <property type="entry name" value="RpiB_LacA_B"/>
    <property type="match status" value="1"/>
</dbReference>
<dbReference type="SUPFAM" id="SSF89623">
    <property type="entry name" value="Ribose/Galactose isomerase RpiB/AlsB"/>
    <property type="match status" value="1"/>
</dbReference>
<reference key="1">
    <citation type="journal article" date="2001" name="Science">
        <title>Complete genome sequence of a virulent isolate of Streptococcus pneumoniae.</title>
        <authorList>
            <person name="Tettelin H."/>
            <person name="Nelson K.E."/>
            <person name="Paulsen I.T."/>
            <person name="Eisen J.A."/>
            <person name="Read T.D."/>
            <person name="Peterson S.N."/>
            <person name="Heidelberg J.F."/>
            <person name="DeBoy R.T."/>
            <person name="Haft D.H."/>
            <person name="Dodson R.J."/>
            <person name="Durkin A.S."/>
            <person name="Gwinn M.L."/>
            <person name="Kolonay J.F."/>
            <person name="Nelson W.C."/>
            <person name="Peterson J.D."/>
            <person name="Umayam L.A."/>
            <person name="White O."/>
            <person name="Salzberg S.L."/>
            <person name="Lewis M.R."/>
            <person name="Radune D."/>
            <person name="Holtzapple E.K."/>
            <person name="Khouri H.M."/>
            <person name="Wolf A.M."/>
            <person name="Utterback T.R."/>
            <person name="Hansen C.L."/>
            <person name="McDonald L.A."/>
            <person name="Feldblyum T.V."/>
            <person name="Angiuoli S.V."/>
            <person name="Dickinson T."/>
            <person name="Hickey E.K."/>
            <person name="Holt I.E."/>
            <person name="Loftus B.J."/>
            <person name="Yang F."/>
            <person name="Smith H.O."/>
            <person name="Venter J.C."/>
            <person name="Dougherty B.A."/>
            <person name="Morrison D.A."/>
            <person name="Hollingshead S.K."/>
            <person name="Fraser C.M."/>
        </authorList>
    </citation>
    <scope>NUCLEOTIDE SEQUENCE [LARGE SCALE GENOMIC DNA]</scope>
    <source>
        <strain>ATCC BAA-334 / TIGR4</strain>
    </source>
</reference>
<accession>Q97QL0</accession>
<sequence length="141" mass="15226">MSIVIGADAAGLRLKEVVKDFLEKENFHLVDVTAEGQDFVDVTLAVAAEVNKEEQNLGIVIDAYGAGPFIVATKIKGMVAAEVSDERSAYMTRGHNNSRMITMGAQLVGDELAKNIAKGFVNGKYDGGRHQIRVDMLNKMG</sequence>